<organism>
    <name type="scientific">Desulfotalea psychrophila (strain LSv54 / DSM 12343)</name>
    <dbReference type="NCBI Taxonomy" id="177439"/>
    <lineage>
        <taxon>Bacteria</taxon>
        <taxon>Pseudomonadati</taxon>
        <taxon>Thermodesulfobacteriota</taxon>
        <taxon>Desulfobulbia</taxon>
        <taxon>Desulfobulbales</taxon>
        <taxon>Desulfocapsaceae</taxon>
        <taxon>Desulfotalea</taxon>
    </lineage>
</organism>
<feature type="chain" id="PRO_0000233767" description="Bifunctional protein GlmU">
    <location>
        <begin position="1"/>
        <end position="339"/>
    </location>
</feature>
<feature type="region of interest" description="Pyrophosphorylase" evidence="1">
    <location>
        <begin position="1"/>
        <end position="234"/>
    </location>
</feature>
<feature type="region of interest" description="Linker" evidence="1">
    <location>
        <begin position="235"/>
        <end position="255"/>
    </location>
</feature>
<feature type="region of interest" description="N-acetyltransferase" evidence="1">
    <location>
        <begin position="256"/>
        <end position="339"/>
    </location>
</feature>
<feature type="binding site" evidence="1">
    <location>
        <begin position="12"/>
        <end position="15"/>
    </location>
    <ligand>
        <name>UDP-N-acetyl-alpha-D-glucosamine</name>
        <dbReference type="ChEBI" id="CHEBI:57705"/>
    </ligand>
</feature>
<feature type="binding site" evidence="1">
    <location>
        <position position="26"/>
    </location>
    <ligand>
        <name>UDP-N-acetyl-alpha-D-glucosamine</name>
        <dbReference type="ChEBI" id="CHEBI:57705"/>
    </ligand>
</feature>
<feature type="binding site" evidence="1">
    <location>
        <position position="77"/>
    </location>
    <ligand>
        <name>UDP-N-acetyl-alpha-D-glucosamine</name>
        <dbReference type="ChEBI" id="CHEBI:57705"/>
    </ligand>
</feature>
<feature type="binding site" evidence="1">
    <location>
        <begin position="82"/>
        <end position="83"/>
    </location>
    <ligand>
        <name>UDP-N-acetyl-alpha-D-glucosamine</name>
        <dbReference type="ChEBI" id="CHEBI:57705"/>
    </ligand>
</feature>
<feature type="binding site" evidence="1">
    <location>
        <position position="107"/>
    </location>
    <ligand>
        <name>Mg(2+)</name>
        <dbReference type="ChEBI" id="CHEBI:18420"/>
    </ligand>
</feature>
<feature type="binding site" evidence="1">
    <location>
        <position position="144"/>
    </location>
    <ligand>
        <name>UDP-N-acetyl-alpha-D-glucosamine</name>
        <dbReference type="ChEBI" id="CHEBI:57705"/>
    </ligand>
</feature>
<feature type="binding site" evidence="1">
    <location>
        <position position="159"/>
    </location>
    <ligand>
        <name>UDP-N-acetyl-alpha-D-glucosamine</name>
        <dbReference type="ChEBI" id="CHEBI:57705"/>
    </ligand>
</feature>
<feature type="binding site" evidence="1">
    <location>
        <position position="174"/>
    </location>
    <ligand>
        <name>UDP-N-acetyl-alpha-D-glucosamine</name>
        <dbReference type="ChEBI" id="CHEBI:57705"/>
    </ligand>
</feature>
<feature type="binding site" evidence="1">
    <location>
        <position position="232"/>
    </location>
    <ligand>
        <name>Mg(2+)</name>
        <dbReference type="ChEBI" id="CHEBI:18420"/>
    </ligand>
</feature>
<feature type="binding site" evidence="1">
    <location>
        <position position="232"/>
    </location>
    <ligand>
        <name>UDP-N-acetyl-alpha-D-glucosamine</name>
        <dbReference type="ChEBI" id="CHEBI:57705"/>
    </ligand>
</feature>
<dbReference type="EC" id="2.7.7.23"/>
<dbReference type="EC" id="2.3.1.157"/>
<dbReference type="EMBL" id="CR522870">
    <property type="protein sequence ID" value="CAG36466.1"/>
    <property type="molecule type" value="Genomic_DNA"/>
</dbReference>
<dbReference type="RefSeq" id="WP_011188978.1">
    <property type="nucleotide sequence ID" value="NC_006138.1"/>
</dbReference>
<dbReference type="SMR" id="Q6AMF9"/>
<dbReference type="STRING" id="177439.DP1737"/>
<dbReference type="KEGG" id="dps:DP1737"/>
<dbReference type="eggNOG" id="COG1207">
    <property type="taxonomic scope" value="Bacteria"/>
</dbReference>
<dbReference type="HOGENOM" id="CLU_029499_15_0_7"/>
<dbReference type="OrthoDB" id="9775031at2"/>
<dbReference type="UniPathway" id="UPA00113">
    <property type="reaction ID" value="UER00532"/>
</dbReference>
<dbReference type="UniPathway" id="UPA00113">
    <property type="reaction ID" value="UER00533"/>
</dbReference>
<dbReference type="UniPathway" id="UPA00973"/>
<dbReference type="Proteomes" id="UP000000602">
    <property type="component" value="Chromosome"/>
</dbReference>
<dbReference type="GO" id="GO:0005737">
    <property type="term" value="C:cytoplasm"/>
    <property type="evidence" value="ECO:0007669"/>
    <property type="project" value="UniProtKB-SubCell"/>
</dbReference>
<dbReference type="GO" id="GO:0016020">
    <property type="term" value="C:membrane"/>
    <property type="evidence" value="ECO:0007669"/>
    <property type="project" value="GOC"/>
</dbReference>
<dbReference type="GO" id="GO:0019134">
    <property type="term" value="F:glucosamine-1-phosphate N-acetyltransferase activity"/>
    <property type="evidence" value="ECO:0007669"/>
    <property type="project" value="UniProtKB-EC"/>
</dbReference>
<dbReference type="GO" id="GO:0046872">
    <property type="term" value="F:metal ion binding"/>
    <property type="evidence" value="ECO:0007669"/>
    <property type="project" value="UniProtKB-KW"/>
</dbReference>
<dbReference type="GO" id="GO:0003977">
    <property type="term" value="F:UDP-N-acetylglucosamine diphosphorylase activity"/>
    <property type="evidence" value="ECO:0007669"/>
    <property type="project" value="UniProtKB-EC"/>
</dbReference>
<dbReference type="GO" id="GO:0071555">
    <property type="term" value="P:cell wall organization"/>
    <property type="evidence" value="ECO:0007669"/>
    <property type="project" value="UniProtKB-KW"/>
</dbReference>
<dbReference type="GO" id="GO:0009245">
    <property type="term" value="P:lipid A biosynthetic process"/>
    <property type="evidence" value="ECO:0007669"/>
    <property type="project" value="UniProtKB-UniPathway"/>
</dbReference>
<dbReference type="GO" id="GO:0009252">
    <property type="term" value="P:peptidoglycan biosynthetic process"/>
    <property type="evidence" value="ECO:0007669"/>
    <property type="project" value="UniProtKB-KW"/>
</dbReference>
<dbReference type="GO" id="GO:0008360">
    <property type="term" value="P:regulation of cell shape"/>
    <property type="evidence" value="ECO:0007669"/>
    <property type="project" value="UniProtKB-KW"/>
</dbReference>
<dbReference type="GO" id="GO:0006048">
    <property type="term" value="P:UDP-N-acetylglucosamine biosynthetic process"/>
    <property type="evidence" value="ECO:0007669"/>
    <property type="project" value="UniProtKB-UniPathway"/>
</dbReference>
<dbReference type="CDD" id="cd02540">
    <property type="entry name" value="GT2_GlmU_N_bac"/>
    <property type="match status" value="1"/>
</dbReference>
<dbReference type="Gene3D" id="2.160.10.10">
    <property type="entry name" value="Hexapeptide repeat proteins"/>
    <property type="match status" value="1"/>
</dbReference>
<dbReference type="Gene3D" id="3.90.550.10">
    <property type="entry name" value="Spore Coat Polysaccharide Biosynthesis Protein SpsA, Chain A"/>
    <property type="match status" value="1"/>
</dbReference>
<dbReference type="InterPro" id="IPR050065">
    <property type="entry name" value="GlmU-like"/>
</dbReference>
<dbReference type="InterPro" id="IPR005835">
    <property type="entry name" value="NTP_transferase_dom"/>
</dbReference>
<dbReference type="InterPro" id="IPR029044">
    <property type="entry name" value="Nucleotide-diphossugar_trans"/>
</dbReference>
<dbReference type="InterPro" id="IPR011004">
    <property type="entry name" value="Trimer_LpxA-like_sf"/>
</dbReference>
<dbReference type="PANTHER" id="PTHR43584:SF3">
    <property type="entry name" value="BIFUNCTIONAL PROTEIN GLMU"/>
    <property type="match status" value="1"/>
</dbReference>
<dbReference type="PANTHER" id="PTHR43584">
    <property type="entry name" value="NUCLEOTIDYL TRANSFERASE"/>
    <property type="match status" value="1"/>
</dbReference>
<dbReference type="Pfam" id="PF00483">
    <property type="entry name" value="NTP_transferase"/>
    <property type="match status" value="1"/>
</dbReference>
<dbReference type="SUPFAM" id="SSF53448">
    <property type="entry name" value="Nucleotide-diphospho-sugar transferases"/>
    <property type="match status" value="1"/>
</dbReference>
<dbReference type="SUPFAM" id="SSF51161">
    <property type="entry name" value="Trimeric LpxA-like enzymes"/>
    <property type="match status" value="1"/>
</dbReference>
<accession>Q6AMF9</accession>
<protein>
    <recommendedName>
        <fullName>Bifunctional protein GlmU</fullName>
    </recommendedName>
    <domain>
        <recommendedName>
            <fullName>UDP-N-acetylglucosamine pyrophosphorylase</fullName>
            <ecNumber>2.7.7.23</ecNumber>
        </recommendedName>
        <alternativeName>
            <fullName>N-acetylglucosamine-1-phosphate uridyltransferase</fullName>
        </alternativeName>
    </domain>
    <domain>
        <recommendedName>
            <fullName>Glucosamine-1-phosphate N-acetyltransferase</fullName>
            <ecNumber>2.3.1.157</ecNumber>
        </recommendedName>
    </domain>
</protein>
<proteinExistence type="inferred from homology"/>
<evidence type="ECO:0000250" key="1"/>
<evidence type="ECO:0000305" key="2"/>
<reference key="1">
    <citation type="journal article" date="2004" name="Environ. Microbiol.">
        <title>The genome of Desulfotalea psychrophila, a sulfate-reducing bacterium from permanently cold Arctic sediments.</title>
        <authorList>
            <person name="Rabus R."/>
            <person name="Ruepp A."/>
            <person name="Frickey T."/>
            <person name="Rattei T."/>
            <person name="Fartmann B."/>
            <person name="Stark M."/>
            <person name="Bauer M."/>
            <person name="Zibat A."/>
            <person name="Lombardot T."/>
            <person name="Becker I."/>
            <person name="Amann J."/>
            <person name="Gellner K."/>
            <person name="Teeling H."/>
            <person name="Leuschner W.D."/>
            <person name="Gloeckner F.-O."/>
            <person name="Lupas A.N."/>
            <person name="Amann R."/>
            <person name="Klenk H.-P."/>
        </authorList>
    </citation>
    <scope>NUCLEOTIDE SEQUENCE [LARGE SCALE GENOMIC DNA]</scope>
    <source>
        <strain>DSM 12343 / LSv54</strain>
    </source>
</reference>
<gene>
    <name type="primary">glmU</name>
    <name type="ordered locus">DP1737</name>
</gene>
<name>GLMU_DESPS</name>
<comment type="function">
    <text evidence="1">Catalyzes the last two sequential reactions in the de novo biosynthetic pathway for UDP-N-acetylglucosamine (UDP-GlcNAc). The C-terminal domain catalyzes the transfer of acetyl group from acetyl coenzyme A to glucosamine-1-phosphate (GlcN-1-P) to produce N-acetylglucosamine-1-phosphate (GlcNAc-1-P), which is converted into UDP-GlcNAc by the transfer of uridine 5-monophosphate (from uridine 5-triphosphate), a reaction catalyzed by the N-terminal domain (By similarity).</text>
</comment>
<comment type="catalytic activity">
    <reaction>
        <text>alpha-D-glucosamine 1-phosphate + acetyl-CoA = N-acetyl-alpha-D-glucosamine 1-phosphate + CoA + H(+)</text>
        <dbReference type="Rhea" id="RHEA:13725"/>
        <dbReference type="ChEBI" id="CHEBI:15378"/>
        <dbReference type="ChEBI" id="CHEBI:57287"/>
        <dbReference type="ChEBI" id="CHEBI:57288"/>
        <dbReference type="ChEBI" id="CHEBI:57776"/>
        <dbReference type="ChEBI" id="CHEBI:58516"/>
        <dbReference type="EC" id="2.3.1.157"/>
    </reaction>
</comment>
<comment type="catalytic activity">
    <reaction>
        <text>N-acetyl-alpha-D-glucosamine 1-phosphate + UTP + H(+) = UDP-N-acetyl-alpha-D-glucosamine + diphosphate</text>
        <dbReference type="Rhea" id="RHEA:13509"/>
        <dbReference type="ChEBI" id="CHEBI:15378"/>
        <dbReference type="ChEBI" id="CHEBI:33019"/>
        <dbReference type="ChEBI" id="CHEBI:46398"/>
        <dbReference type="ChEBI" id="CHEBI:57705"/>
        <dbReference type="ChEBI" id="CHEBI:57776"/>
        <dbReference type="EC" id="2.7.7.23"/>
    </reaction>
</comment>
<comment type="cofactor">
    <cofactor evidence="1">
        <name>Mg(2+)</name>
        <dbReference type="ChEBI" id="CHEBI:18420"/>
    </cofactor>
    <text evidence="1">Binds 1 Mg(2+) ion per subunit.</text>
</comment>
<comment type="pathway">
    <text>Nucleotide-sugar biosynthesis; UDP-N-acetyl-alpha-D-glucosamine biosynthesis; N-acetyl-alpha-D-glucosamine 1-phosphate from alpha-D-glucosamine 6-phosphate (route II): step 2/2.</text>
</comment>
<comment type="pathway">
    <text>Nucleotide-sugar biosynthesis; UDP-N-acetyl-alpha-D-glucosamine biosynthesis; UDP-N-acetyl-alpha-D-glucosamine from N-acetyl-alpha-D-glucosamine 1-phosphate: step 1/1.</text>
</comment>
<comment type="pathway">
    <text>Bacterial outer membrane biogenesis; LPS lipid A biosynthesis.</text>
</comment>
<comment type="subunit">
    <text evidence="1">Homotrimer.</text>
</comment>
<comment type="subcellular location">
    <subcellularLocation>
        <location evidence="1">Cytoplasm</location>
    </subcellularLocation>
</comment>
<comment type="similarity">
    <text evidence="2">Belongs to the N-acetylglucosamine-1-phosphate uridyltransferase family.</text>
</comment>
<keyword id="KW-0012">Acyltransferase</keyword>
<keyword id="KW-0133">Cell shape</keyword>
<keyword id="KW-0961">Cell wall biogenesis/degradation</keyword>
<keyword id="KW-0963">Cytoplasm</keyword>
<keyword id="KW-0460">Magnesium</keyword>
<keyword id="KW-0479">Metal-binding</keyword>
<keyword id="KW-0511">Multifunctional enzyme</keyword>
<keyword id="KW-0548">Nucleotidyltransferase</keyword>
<keyword id="KW-0573">Peptidoglycan synthesis</keyword>
<keyword id="KW-1185">Reference proteome</keyword>
<keyword id="KW-0677">Repeat</keyword>
<keyword id="KW-0808">Transferase</keyword>
<sequence length="339" mass="37129">MKKENPLAIVILAAGKGTRMKSELAKVLHPVFGRPMIQHVLASTAGLPSDKRIIIIGHQRHAVREALADDACTFVVQEEQLGTAHAVLTAKEAIADDCEDVMILCGDTPLISGQSLEEMYDRHRTNSATVTLMTTQLGDPTNYGRIISDNAGNLLRIVEEKDADPAEKRIKEINAGIYCVRRDFLYRALQKVENNNSQGELYLTDIIDLAVKSEQKVQRYLAPEPKDVLGVNSRIELAMADEELRMRRNREVMLTGVSMILPATIMISSQSEIGFDSLVGAGVELRGHCQIGSNCKIDTGAILTNCKMESGSHVGAYSVLTGCTVAADEKIPAQQREEE</sequence>